<feature type="chain" id="PRO_1000189552" description="Ribulokinase">
    <location>
        <begin position="1"/>
        <end position="566"/>
    </location>
</feature>
<proteinExistence type="inferred from homology"/>
<protein>
    <recommendedName>
        <fullName evidence="1">Ribulokinase</fullName>
        <ecNumber evidence="1">2.7.1.16</ecNumber>
    </recommendedName>
</protein>
<organism>
    <name type="scientific">Escherichia coli (strain 55989 / EAEC)</name>
    <dbReference type="NCBI Taxonomy" id="585055"/>
    <lineage>
        <taxon>Bacteria</taxon>
        <taxon>Pseudomonadati</taxon>
        <taxon>Pseudomonadota</taxon>
        <taxon>Gammaproteobacteria</taxon>
        <taxon>Enterobacterales</taxon>
        <taxon>Enterobacteriaceae</taxon>
        <taxon>Escherichia</taxon>
    </lineage>
</organism>
<accession>B7L4I4</accession>
<sequence length="566" mass="61126">MAIAIGLDFGSDSVRALAVDCASGEEIATSVEWYPRWQKGQFCDAPNNQFRHHPRDYIESMEAALKTVLAELSVEQRAAVVGIGVDTTGSTPAPIDADGNVLALRPEFAENPNAMFVLWKDHTAVEEAEEITRLCHAPGNVDYSRYIGGIYSSEWFWAKILHVTRQDTAVAQSAASWIELCDWVPALLSGTTRPQDIRRGRCSAGHKSLWHESWGGLPPASFFDELDPILNRHLPSPLFTDTWTADIPVGTLCPEWAQRLGLPESVVISGGAFDCHMGAVGAGAQPNALVKVIGTSTCDILIADKQSVGERAVKGICGQVDGSVVPGFIGLEAGQSAFGDIYAWFGRVLGWPLEQLAAQHPELKAQINASQKQLLPALTEAWAKNPSLDHLPVVLDWFNGRRTPNANQRLKGVITDLNLATDAPLLFGGLIAATAFGARAIMECFTDQGIAVNNVMALGGIARKNQVIMQACCDVLNRPLQIVASDQCCALGAAIFAAVAAKVHADIPSAQQKMASAVEKTLQPRSEQAQRFEQLYRRYQQWAMSAEQHYLPTSAPAQAAQAVATL</sequence>
<name>ARAB_ECO55</name>
<reference key="1">
    <citation type="journal article" date="2009" name="PLoS Genet.">
        <title>Organised genome dynamics in the Escherichia coli species results in highly diverse adaptive paths.</title>
        <authorList>
            <person name="Touchon M."/>
            <person name="Hoede C."/>
            <person name="Tenaillon O."/>
            <person name="Barbe V."/>
            <person name="Baeriswyl S."/>
            <person name="Bidet P."/>
            <person name="Bingen E."/>
            <person name="Bonacorsi S."/>
            <person name="Bouchier C."/>
            <person name="Bouvet O."/>
            <person name="Calteau A."/>
            <person name="Chiapello H."/>
            <person name="Clermont O."/>
            <person name="Cruveiller S."/>
            <person name="Danchin A."/>
            <person name="Diard M."/>
            <person name="Dossat C."/>
            <person name="Karoui M.E."/>
            <person name="Frapy E."/>
            <person name="Garry L."/>
            <person name="Ghigo J.M."/>
            <person name="Gilles A.M."/>
            <person name="Johnson J."/>
            <person name="Le Bouguenec C."/>
            <person name="Lescat M."/>
            <person name="Mangenot S."/>
            <person name="Martinez-Jehanne V."/>
            <person name="Matic I."/>
            <person name="Nassif X."/>
            <person name="Oztas S."/>
            <person name="Petit M.A."/>
            <person name="Pichon C."/>
            <person name="Rouy Z."/>
            <person name="Ruf C.S."/>
            <person name="Schneider D."/>
            <person name="Tourret J."/>
            <person name="Vacherie B."/>
            <person name="Vallenet D."/>
            <person name="Medigue C."/>
            <person name="Rocha E.P.C."/>
            <person name="Denamur E."/>
        </authorList>
    </citation>
    <scope>NUCLEOTIDE SEQUENCE [LARGE SCALE GENOMIC DNA]</scope>
    <source>
        <strain>55989 / EAEC</strain>
    </source>
</reference>
<keyword id="KW-0054">Arabinose catabolism</keyword>
<keyword id="KW-0067">ATP-binding</keyword>
<keyword id="KW-0119">Carbohydrate metabolism</keyword>
<keyword id="KW-0418">Kinase</keyword>
<keyword id="KW-0547">Nucleotide-binding</keyword>
<keyword id="KW-1185">Reference proteome</keyword>
<keyword id="KW-0808">Transferase</keyword>
<dbReference type="EC" id="2.7.1.16" evidence="1"/>
<dbReference type="EMBL" id="CU928145">
    <property type="protein sequence ID" value="CAU95948.1"/>
    <property type="molecule type" value="Genomic_DNA"/>
</dbReference>
<dbReference type="RefSeq" id="WP_000951795.1">
    <property type="nucleotide sequence ID" value="NC_011748.1"/>
</dbReference>
<dbReference type="SMR" id="B7L4I4"/>
<dbReference type="KEGG" id="eck:EC55989_0061"/>
<dbReference type="HOGENOM" id="CLU_009281_9_1_6"/>
<dbReference type="UniPathway" id="UPA00145">
    <property type="reaction ID" value="UER00566"/>
</dbReference>
<dbReference type="Proteomes" id="UP000000746">
    <property type="component" value="Chromosome"/>
</dbReference>
<dbReference type="GO" id="GO:0005737">
    <property type="term" value="C:cytoplasm"/>
    <property type="evidence" value="ECO:0007669"/>
    <property type="project" value="TreeGrafter"/>
</dbReference>
<dbReference type="GO" id="GO:0005524">
    <property type="term" value="F:ATP binding"/>
    <property type="evidence" value="ECO:0007669"/>
    <property type="project" value="UniProtKB-KW"/>
</dbReference>
<dbReference type="GO" id="GO:0019150">
    <property type="term" value="F:D-ribulokinase activity"/>
    <property type="evidence" value="ECO:0007669"/>
    <property type="project" value="RHEA"/>
</dbReference>
<dbReference type="GO" id="GO:0008741">
    <property type="term" value="F:ribulokinase activity"/>
    <property type="evidence" value="ECO:0007669"/>
    <property type="project" value="UniProtKB-UniRule"/>
</dbReference>
<dbReference type="GO" id="GO:0019569">
    <property type="term" value="P:L-arabinose catabolic process to xylulose 5-phosphate"/>
    <property type="evidence" value="ECO:0007669"/>
    <property type="project" value="UniProtKB-UniRule"/>
</dbReference>
<dbReference type="CDD" id="cd07781">
    <property type="entry name" value="ASKHA_NBD_FGGY_L-RBK"/>
    <property type="match status" value="1"/>
</dbReference>
<dbReference type="Gene3D" id="1.20.58.2240">
    <property type="match status" value="1"/>
</dbReference>
<dbReference type="Gene3D" id="3.30.420.40">
    <property type="match status" value="1"/>
</dbReference>
<dbReference type="HAMAP" id="MF_00520">
    <property type="entry name" value="Ribulokinase"/>
    <property type="match status" value="1"/>
</dbReference>
<dbReference type="InterPro" id="IPR043129">
    <property type="entry name" value="ATPase_NBD"/>
</dbReference>
<dbReference type="InterPro" id="IPR018485">
    <property type="entry name" value="FGGY_C"/>
</dbReference>
<dbReference type="InterPro" id="IPR005929">
    <property type="entry name" value="Ribulokinase"/>
</dbReference>
<dbReference type="NCBIfam" id="TIGR01234">
    <property type="entry name" value="L-ribulokinase"/>
    <property type="match status" value="1"/>
</dbReference>
<dbReference type="NCBIfam" id="NF003154">
    <property type="entry name" value="PRK04123.1"/>
    <property type="match status" value="1"/>
</dbReference>
<dbReference type="PANTHER" id="PTHR43435:SF4">
    <property type="entry name" value="FGGY CARBOHYDRATE KINASE DOMAIN-CONTAINING PROTEIN"/>
    <property type="match status" value="1"/>
</dbReference>
<dbReference type="PANTHER" id="PTHR43435">
    <property type="entry name" value="RIBULOKINASE"/>
    <property type="match status" value="1"/>
</dbReference>
<dbReference type="Pfam" id="PF02782">
    <property type="entry name" value="FGGY_C"/>
    <property type="match status" value="1"/>
</dbReference>
<dbReference type="SUPFAM" id="SSF53067">
    <property type="entry name" value="Actin-like ATPase domain"/>
    <property type="match status" value="2"/>
</dbReference>
<evidence type="ECO:0000255" key="1">
    <source>
        <dbReference type="HAMAP-Rule" id="MF_00520"/>
    </source>
</evidence>
<gene>
    <name evidence="1" type="primary">araB</name>
    <name type="ordered locus">EC55989_0061</name>
</gene>
<comment type="catalytic activity">
    <reaction evidence="1">
        <text>D-ribulose + ATP = D-ribulose 5-phosphate + ADP + H(+)</text>
        <dbReference type="Rhea" id="RHEA:17601"/>
        <dbReference type="ChEBI" id="CHEBI:15378"/>
        <dbReference type="ChEBI" id="CHEBI:17173"/>
        <dbReference type="ChEBI" id="CHEBI:30616"/>
        <dbReference type="ChEBI" id="CHEBI:58121"/>
        <dbReference type="ChEBI" id="CHEBI:456216"/>
        <dbReference type="EC" id="2.7.1.16"/>
    </reaction>
</comment>
<comment type="catalytic activity">
    <reaction evidence="1">
        <text>L-ribulose + ATP = L-ribulose 5-phosphate + ADP + H(+)</text>
        <dbReference type="Rhea" id="RHEA:22072"/>
        <dbReference type="ChEBI" id="CHEBI:15378"/>
        <dbReference type="ChEBI" id="CHEBI:16880"/>
        <dbReference type="ChEBI" id="CHEBI:30616"/>
        <dbReference type="ChEBI" id="CHEBI:58226"/>
        <dbReference type="ChEBI" id="CHEBI:456216"/>
        <dbReference type="EC" id="2.7.1.16"/>
    </reaction>
</comment>
<comment type="pathway">
    <text evidence="1">Carbohydrate degradation; L-arabinose degradation via L-ribulose; D-xylulose 5-phosphate from L-arabinose (bacterial route): step 2/3.</text>
</comment>
<comment type="similarity">
    <text evidence="1">Belongs to the ribulokinase family.</text>
</comment>